<comment type="function">
    <text evidence="1">Acts as a radical domain for damaged PFL and possibly other radical proteins.</text>
</comment>
<dbReference type="EMBL" id="BX950851">
    <property type="protein sequence ID" value="CAG76186.1"/>
    <property type="molecule type" value="Genomic_DNA"/>
</dbReference>
<dbReference type="RefSeq" id="WP_011094805.1">
    <property type="nucleotide sequence ID" value="NC_004547.2"/>
</dbReference>
<dbReference type="SMR" id="Q6D209"/>
<dbReference type="STRING" id="218491.ECA3288"/>
<dbReference type="GeneID" id="57209971"/>
<dbReference type="KEGG" id="eca:ECA3288"/>
<dbReference type="PATRIC" id="fig|218491.5.peg.3334"/>
<dbReference type="eggNOG" id="COG3445">
    <property type="taxonomic scope" value="Bacteria"/>
</dbReference>
<dbReference type="HOGENOM" id="CLU_133780_0_0_6"/>
<dbReference type="OrthoDB" id="9803969at2"/>
<dbReference type="Proteomes" id="UP000007966">
    <property type="component" value="Chromosome"/>
</dbReference>
<dbReference type="GO" id="GO:0005829">
    <property type="term" value="C:cytosol"/>
    <property type="evidence" value="ECO:0007669"/>
    <property type="project" value="TreeGrafter"/>
</dbReference>
<dbReference type="GO" id="GO:0008861">
    <property type="term" value="F:formate C-acetyltransferase activity"/>
    <property type="evidence" value="ECO:0007669"/>
    <property type="project" value="TreeGrafter"/>
</dbReference>
<dbReference type="FunFam" id="3.20.70.20:FF:000002">
    <property type="entry name" value="Autonomous glycyl radical cofactor"/>
    <property type="match status" value="1"/>
</dbReference>
<dbReference type="Gene3D" id="3.20.70.20">
    <property type="match status" value="1"/>
</dbReference>
<dbReference type="HAMAP" id="MF_00806">
    <property type="entry name" value="GrcA"/>
    <property type="match status" value="1"/>
</dbReference>
<dbReference type="InterPro" id="IPR050244">
    <property type="entry name" value="Auton_GlycylRad_Cofactor"/>
</dbReference>
<dbReference type="InterPro" id="IPR019777">
    <property type="entry name" value="Form_AcTrfase_GR_CS"/>
</dbReference>
<dbReference type="InterPro" id="IPR001150">
    <property type="entry name" value="Gly_radical"/>
</dbReference>
<dbReference type="InterPro" id="IPR011140">
    <property type="entry name" value="Glycyl_radical_cofactor_GrcA"/>
</dbReference>
<dbReference type="NCBIfam" id="TIGR04365">
    <property type="entry name" value="spare_glycyl"/>
    <property type="match status" value="1"/>
</dbReference>
<dbReference type="PANTHER" id="PTHR30191">
    <property type="entry name" value="FORMATE ACETYLTRANSFERASE"/>
    <property type="match status" value="1"/>
</dbReference>
<dbReference type="PANTHER" id="PTHR30191:SF0">
    <property type="entry name" value="FORMATE ACETYLTRANSFERASE 1"/>
    <property type="match status" value="1"/>
</dbReference>
<dbReference type="Pfam" id="PF01228">
    <property type="entry name" value="Gly_radical"/>
    <property type="match status" value="1"/>
</dbReference>
<dbReference type="PIRSF" id="PIRSF000378">
    <property type="entry name" value="Gly_radicl_yfiD"/>
    <property type="match status" value="1"/>
</dbReference>
<dbReference type="SUPFAM" id="SSF51998">
    <property type="entry name" value="PFL-like glycyl radical enzymes"/>
    <property type="match status" value="1"/>
</dbReference>
<dbReference type="PROSITE" id="PS00850">
    <property type="entry name" value="GLY_RADICAL_1"/>
    <property type="match status" value="1"/>
</dbReference>
<dbReference type="PROSITE" id="PS51149">
    <property type="entry name" value="GLY_RADICAL_2"/>
    <property type="match status" value="1"/>
</dbReference>
<gene>
    <name evidence="1" type="primary">grcA</name>
    <name type="ordered locus">ECA3288</name>
</gene>
<accession>Q6D209</accession>
<organism>
    <name type="scientific">Pectobacterium atrosepticum (strain SCRI 1043 / ATCC BAA-672)</name>
    <name type="common">Erwinia carotovora subsp. atroseptica</name>
    <dbReference type="NCBI Taxonomy" id="218491"/>
    <lineage>
        <taxon>Bacteria</taxon>
        <taxon>Pseudomonadati</taxon>
        <taxon>Pseudomonadota</taxon>
        <taxon>Gammaproteobacteria</taxon>
        <taxon>Enterobacterales</taxon>
        <taxon>Pectobacteriaceae</taxon>
        <taxon>Pectobacterium</taxon>
    </lineage>
</organism>
<proteinExistence type="inferred from homology"/>
<name>GRCA_PECAS</name>
<protein>
    <recommendedName>
        <fullName evidence="1">Autonomous glycyl radical cofactor</fullName>
    </recommendedName>
</protein>
<feature type="chain" id="PRO_0000166700" description="Autonomous glycyl radical cofactor">
    <location>
        <begin position="1"/>
        <end position="127"/>
    </location>
</feature>
<feature type="domain" description="Glycine radical" evidence="1">
    <location>
        <begin position="5"/>
        <end position="127"/>
    </location>
</feature>
<feature type="modified residue" description="Glycine radical" evidence="1">
    <location>
        <position position="102"/>
    </location>
</feature>
<sequence>MVTGIQITKANDSALINSFWLLDEEKSQARCVCAKSGYSEDQIVPMSDLGQIEYREIPLEIKPEVRVEGGQHLNVNVLRRETLEDAVKHPENYPQLTIRVSGYAVRFNSLTPEQQRDVIARTFTASL</sequence>
<keyword id="KW-0556">Organic radical</keyword>
<keyword id="KW-1185">Reference proteome</keyword>
<evidence type="ECO:0000255" key="1">
    <source>
        <dbReference type="HAMAP-Rule" id="MF_00806"/>
    </source>
</evidence>
<reference key="1">
    <citation type="journal article" date="2004" name="Proc. Natl. Acad. Sci. U.S.A.">
        <title>Genome sequence of the enterobacterial phytopathogen Erwinia carotovora subsp. atroseptica and characterization of virulence factors.</title>
        <authorList>
            <person name="Bell K.S."/>
            <person name="Sebaihia M."/>
            <person name="Pritchard L."/>
            <person name="Holden M.T.G."/>
            <person name="Hyman L.J."/>
            <person name="Holeva M.C."/>
            <person name="Thomson N.R."/>
            <person name="Bentley S.D."/>
            <person name="Churcher L.J.C."/>
            <person name="Mungall K."/>
            <person name="Atkin R."/>
            <person name="Bason N."/>
            <person name="Brooks K."/>
            <person name="Chillingworth T."/>
            <person name="Clark K."/>
            <person name="Doggett J."/>
            <person name="Fraser A."/>
            <person name="Hance Z."/>
            <person name="Hauser H."/>
            <person name="Jagels K."/>
            <person name="Moule S."/>
            <person name="Norbertczak H."/>
            <person name="Ormond D."/>
            <person name="Price C."/>
            <person name="Quail M.A."/>
            <person name="Sanders M."/>
            <person name="Walker D."/>
            <person name="Whitehead S."/>
            <person name="Salmond G.P.C."/>
            <person name="Birch P.R.J."/>
            <person name="Parkhill J."/>
            <person name="Toth I.K."/>
        </authorList>
    </citation>
    <scope>NUCLEOTIDE SEQUENCE [LARGE SCALE GENOMIC DNA]</scope>
    <source>
        <strain>SCRI 1043 / ATCC BAA-672</strain>
    </source>
</reference>